<feature type="chain" id="PRO_0000053569" description="Retinoic acid receptor RXR-alpha">
    <location>
        <begin position="1"/>
        <end position="488"/>
    </location>
</feature>
<feature type="domain" description="NR LBD" evidence="4">
    <location>
        <begin position="253"/>
        <end position="484"/>
    </location>
</feature>
<feature type="DNA-binding region" description="Nuclear receptor" evidence="3">
    <location>
        <begin position="158"/>
        <end position="233"/>
    </location>
</feature>
<feature type="zinc finger region" description="NR C4-type" evidence="3">
    <location>
        <begin position="161"/>
        <end position="181"/>
    </location>
</feature>
<feature type="zinc finger region" description="NR C4-type" evidence="3">
    <location>
        <begin position="197"/>
        <end position="216"/>
    </location>
</feature>
<feature type="region of interest" description="Modulating" evidence="1">
    <location>
        <begin position="1"/>
        <end position="160"/>
    </location>
</feature>
<feature type="region of interest" description="Nuclear localization signal" evidence="2">
    <location>
        <begin position="186"/>
        <end position="191"/>
    </location>
</feature>
<feature type="region of interest" description="Hinge">
    <location>
        <begin position="227"/>
        <end position="250"/>
    </location>
</feature>
<feature type="region of interest" description="Disordered" evidence="5">
    <location>
        <begin position="232"/>
        <end position="256"/>
    </location>
</feature>
<feature type="region of interest" description="Required for nuclear export" evidence="2">
    <location>
        <begin position="374"/>
        <end position="394"/>
    </location>
</feature>
<feature type="region of interest" description="AF-2" evidence="4">
    <location>
        <begin position="473"/>
        <end position="484"/>
    </location>
</feature>
<feature type="compositionally biased region" description="Basic and acidic residues" evidence="5">
    <location>
        <begin position="232"/>
        <end position="244"/>
    </location>
</feature>
<feature type="binding site" evidence="2">
    <location>
        <position position="161"/>
    </location>
    <ligand>
        <name>Zn(2+)</name>
        <dbReference type="ChEBI" id="CHEBI:29105"/>
        <label>1</label>
    </ligand>
</feature>
<feature type="binding site" evidence="2">
    <location>
        <position position="164"/>
    </location>
    <ligand>
        <name>Zn(2+)</name>
        <dbReference type="ChEBI" id="CHEBI:29105"/>
        <label>1</label>
    </ligand>
</feature>
<feature type="binding site" evidence="2">
    <location>
        <position position="178"/>
    </location>
    <ligand>
        <name>Zn(2+)</name>
        <dbReference type="ChEBI" id="CHEBI:29105"/>
        <label>1</label>
    </ligand>
</feature>
<feature type="binding site" evidence="2">
    <location>
        <position position="181"/>
    </location>
    <ligand>
        <name>Zn(2+)</name>
        <dbReference type="ChEBI" id="CHEBI:29105"/>
        <label>1</label>
    </ligand>
</feature>
<feature type="binding site" evidence="2">
    <location>
        <position position="197"/>
    </location>
    <ligand>
        <name>Zn(2+)</name>
        <dbReference type="ChEBI" id="CHEBI:29105"/>
        <label>2</label>
    </ligand>
</feature>
<feature type="binding site" evidence="2">
    <location>
        <position position="203"/>
    </location>
    <ligand>
        <name>Zn(2+)</name>
        <dbReference type="ChEBI" id="CHEBI:29105"/>
        <label>2</label>
    </ligand>
</feature>
<feature type="binding site" evidence="2">
    <location>
        <position position="213"/>
    </location>
    <ligand>
        <name>Zn(2+)</name>
        <dbReference type="ChEBI" id="CHEBI:29105"/>
        <label>2</label>
    </ligand>
</feature>
<feature type="binding site" evidence="2">
    <location>
        <position position="216"/>
    </location>
    <ligand>
        <name>Zn(2+)</name>
        <dbReference type="ChEBI" id="CHEBI:29105"/>
        <label>2</label>
    </ligand>
</feature>
<feature type="binding site" evidence="2">
    <location>
        <position position="342"/>
    </location>
    <ligand>
        <name>9-cis-retinoate</name>
        <dbReference type="ChEBI" id="CHEBI:78630"/>
    </ligand>
</feature>
<feature type="binding site" evidence="2">
    <location>
        <position position="342"/>
    </location>
    <ligand>
        <name>all-trans-retinoate</name>
        <dbReference type="ChEBI" id="CHEBI:35291"/>
    </ligand>
</feature>
<feature type="binding site" evidence="2">
    <location>
        <position position="353"/>
    </location>
    <ligand>
        <name>9-cis-retinoate</name>
        <dbReference type="ChEBI" id="CHEBI:78630"/>
    </ligand>
</feature>
<feature type="binding site" evidence="2">
    <location>
        <position position="353"/>
    </location>
    <ligand>
        <name>all-trans-retinoate</name>
        <dbReference type="ChEBI" id="CHEBI:35291"/>
    </ligand>
</feature>
<feature type="cross-link" description="Glycyl lysine isopeptide (Lys-Gly) (interchain with G-Cter in SUMO)" evidence="1">
    <location>
        <position position="134"/>
    </location>
</feature>
<accession>P51128</accession>
<sequence length="488" mass="53469">MSSAAMDTKHFLPLGGRTCADTLRCTTSWTAGYDFSSQVNSSSLSSSGLRGSMTAPLLHPSLGNSGLNNSLGSPTQLPSPLSSPINGMGPPFSVISPPLGPSMAIPSTPGLGYGTGSPQIHSPMNSVSSTEDIKPPPGINGILKVPMHPSGAMASFTKHICAICGDRSSGKHYGVYSCEGCKGFFKRTVRKDLTYTCRDSKDCMIDKRQRNRCQYCRYQKCLAMGMKREAVQEERQRGKERNENEVESSNSANEDMPVEKILEAEHAVEPKTETYTEANMGLAPNSPSDPVTNICQAADKQLFTLVEWAKRIPHFSELPLDDQVILLRAGWNELLIASFSHRSIAVKDGILLATGLHVHRNSAHSAGVGAIFDRVLTELVSKMRDMQMDKTELGCLRAIVLFNPDSKGLSNPLEVEALREKVYASLEAYCKQKYPEQPGRFAKLLLRLPALRSIGLKCLEHLFFFKLIGDTPIDTFLMEMLEAPHQMT</sequence>
<reference key="1">
    <citation type="journal article" date="1992" name="Proc. Natl. Acad. Sci. U.S.A.">
        <title>Multiple retinoid-responsive receptors in a single cell: families of retinoid 'X' receptors and retinoic acid receptors in the Xenopus egg.</title>
        <authorList>
            <person name="Blumberg B."/>
            <person name="Mangelsdorf D.J."/>
            <person name="Dyck J.A."/>
            <person name="Bittner D.A."/>
            <person name="Evans R.M."/>
            <person name="De Robertis E.M."/>
        </authorList>
    </citation>
    <scope>NUCLEOTIDE SEQUENCE [MRNA]</scope>
</reference>
<reference key="2">
    <citation type="journal article" date="1998" name="Mol. Endocrinol.">
        <title>Molecular cloning of xSRC-3, a novel transcription coactivator from Xenopus, that is related to AIB1, p/CIP and TIF2.</title>
        <authorList>
            <person name="Kim H.-J."/>
            <person name="Lee S.-K."/>
            <person name="Na S.-Y."/>
            <person name="Choi H.-S."/>
            <person name="Lee J.W."/>
        </authorList>
    </citation>
    <scope>INTERACTION WITH NCOA3</scope>
</reference>
<reference key="3">
    <citation type="journal article" date="2006" name="J. Biol. Chem.">
        <title>Negative modulation of RXRalpha transcriptional activity by small ubiquitin-related modifier (SUMO) modification and its reversal by SUMO-specific protease SUSP1.</title>
        <authorList>
            <person name="Choi S.J."/>
            <person name="Chung S.S."/>
            <person name="Rho E.J."/>
            <person name="Lee H.W."/>
            <person name="Lee M.H."/>
            <person name="Choi H.S."/>
            <person name="Seol J.H."/>
            <person name="Baek S.H."/>
            <person name="Bang O.S."/>
            <person name="Chung C.H."/>
        </authorList>
    </citation>
    <scope>INTERACTION WITH SENP6</scope>
</reference>
<protein>
    <recommendedName>
        <fullName>Retinoic acid receptor RXR-alpha</fullName>
    </recommendedName>
    <alternativeName>
        <fullName>Nuclear receptor subfamily 2 group B member 1</fullName>
    </alternativeName>
    <alternativeName>
        <fullName>Retinoid X receptor alpha</fullName>
    </alternativeName>
</protein>
<proteinExistence type="evidence at protein level"/>
<evidence type="ECO:0000250" key="1"/>
<evidence type="ECO:0000250" key="2">
    <source>
        <dbReference type="UniProtKB" id="P19793"/>
    </source>
</evidence>
<evidence type="ECO:0000255" key="3">
    <source>
        <dbReference type="PROSITE-ProRule" id="PRU00407"/>
    </source>
</evidence>
<evidence type="ECO:0000255" key="4">
    <source>
        <dbReference type="PROSITE-ProRule" id="PRU01189"/>
    </source>
</evidence>
<evidence type="ECO:0000256" key="5">
    <source>
        <dbReference type="SAM" id="MobiDB-lite"/>
    </source>
</evidence>
<evidence type="ECO:0000269" key="6">
    <source>
    </source>
</evidence>
<evidence type="ECO:0000269" key="7">
    <source>
    </source>
</evidence>
<evidence type="ECO:0000305" key="8"/>
<keyword id="KW-0238">DNA-binding</keyword>
<keyword id="KW-1017">Isopeptide bond</keyword>
<keyword id="KW-0479">Metal-binding</keyword>
<keyword id="KW-0539">Nucleus</keyword>
<keyword id="KW-0675">Receptor</keyword>
<keyword id="KW-1185">Reference proteome</keyword>
<keyword id="KW-0804">Transcription</keyword>
<keyword id="KW-0805">Transcription regulation</keyword>
<keyword id="KW-0832">Ubl conjugation</keyword>
<keyword id="KW-0862">Zinc</keyword>
<keyword id="KW-0863">Zinc-finger</keyword>
<dbReference type="EMBL" id="L11446">
    <property type="status" value="NOT_ANNOTATED_CDS"/>
    <property type="molecule type" value="mRNA"/>
</dbReference>
<dbReference type="PIR" id="C41977">
    <property type="entry name" value="C41977"/>
</dbReference>
<dbReference type="SMR" id="P51128"/>
<dbReference type="GeneID" id="378685"/>
<dbReference type="KEGG" id="xla:378685"/>
<dbReference type="AGR" id="Xenbase:XB-GENE-865207"/>
<dbReference type="CTD" id="378685"/>
<dbReference type="Xenbase" id="XB-GENE-865207">
    <property type="gene designation" value="rxra.L"/>
</dbReference>
<dbReference type="OMA" id="RDERSCM"/>
<dbReference type="OrthoDB" id="5873264at2759"/>
<dbReference type="Proteomes" id="UP000186698">
    <property type="component" value="Chromosome 8L"/>
</dbReference>
<dbReference type="Bgee" id="378685">
    <property type="expression patterns" value="Expressed in muscle tissue and 17 other cell types or tissues"/>
</dbReference>
<dbReference type="GO" id="GO:0090575">
    <property type="term" value="C:RNA polymerase II transcription regulator complex"/>
    <property type="evidence" value="ECO:0000318"/>
    <property type="project" value="GO_Central"/>
</dbReference>
<dbReference type="GO" id="GO:0004879">
    <property type="term" value="F:nuclear receptor activity"/>
    <property type="evidence" value="ECO:0000318"/>
    <property type="project" value="GO_Central"/>
</dbReference>
<dbReference type="GO" id="GO:0003707">
    <property type="term" value="F:nuclear steroid receptor activity"/>
    <property type="evidence" value="ECO:0007669"/>
    <property type="project" value="InterPro"/>
</dbReference>
<dbReference type="GO" id="GO:0046966">
    <property type="term" value="F:nuclear thyroid hormone receptor binding"/>
    <property type="evidence" value="ECO:0000353"/>
    <property type="project" value="UniProtKB"/>
</dbReference>
<dbReference type="GO" id="GO:0046982">
    <property type="term" value="F:protein heterodimerization activity"/>
    <property type="evidence" value="ECO:0000353"/>
    <property type="project" value="UniProtKB"/>
</dbReference>
<dbReference type="GO" id="GO:0044323">
    <property type="term" value="F:retinoic acid-responsive element binding"/>
    <property type="evidence" value="ECO:0000318"/>
    <property type="project" value="GO_Central"/>
</dbReference>
<dbReference type="GO" id="GO:0008270">
    <property type="term" value="F:zinc ion binding"/>
    <property type="evidence" value="ECO:0007669"/>
    <property type="project" value="UniProtKB-KW"/>
</dbReference>
<dbReference type="GO" id="GO:0030154">
    <property type="term" value="P:cell differentiation"/>
    <property type="evidence" value="ECO:0000318"/>
    <property type="project" value="GO_Central"/>
</dbReference>
<dbReference type="GO" id="GO:0007399">
    <property type="term" value="P:nervous system development"/>
    <property type="evidence" value="ECO:0000318"/>
    <property type="project" value="GO_Central"/>
</dbReference>
<dbReference type="GO" id="GO:0045944">
    <property type="term" value="P:positive regulation of transcription by RNA polymerase II"/>
    <property type="evidence" value="ECO:0000318"/>
    <property type="project" value="GO_Central"/>
</dbReference>
<dbReference type="GO" id="GO:0048384">
    <property type="term" value="P:retinoic acid receptor signaling pathway"/>
    <property type="evidence" value="ECO:0000318"/>
    <property type="project" value="GO_Central"/>
</dbReference>
<dbReference type="CDD" id="cd06956">
    <property type="entry name" value="NR_DBD_RXR"/>
    <property type="match status" value="1"/>
</dbReference>
<dbReference type="CDD" id="cd06943">
    <property type="entry name" value="NR_LBD_RXR_like"/>
    <property type="match status" value="1"/>
</dbReference>
<dbReference type="FunFam" id="1.10.565.10:FF:000002">
    <property type="entry name" value="Retinoic acid receptor RXR-alpha"/>
    <property type="match status" value="1"/>
</dbReference>
<dbReference type="FunFam" id="3.30.50.10:FF:000005">
    <property type="entry name" value="Retinoic acid receptor RXR-alpha"/>
    <property type="match status" value="1"/>
</dbReference>
<dbReference type="Gene3D" id="3.30.50.10">
    <property type="entry name" value="Erythroid Transcription Factor GATA-1, subunit A"/>
    <property type="match status" value="1"/>
</dbReference>
<dbReference type="Gene3D" id="1.10.565.10">
    <property type="entry name" value="Retinoid X Receptor"/>
    <property type="match status" value="1"/>
</dbReference>
<dbReference type="InterPro" id="IPR035500">
    <property type="entry name" value="NHR-like_dom_sf"/>
</dbReference>
<dbReference type="InterPro" id="IPR021780">
    <property type="entry name" value="Nuc_recep-AF1"/>
</dbReference>
<dbReference type="InterPro" id="IPR000536">
    <property type="entry name" value="Nucl_hrmn_rcpt_lig-bd"/>
</dbReference>
<dbReference type="InterPro" id="IPR050274">
    <property type="entry name" value="Nuclear_hormone_rcpt_NR2"/>
</dbReference>
<dbReference type="InterPro" id="IPR001723">
    <property type="entry name" value="Nuclear_hrmn_rcpt"/>
</dbReference>
<dbReference type="InterPro" id="IPR000003">
    <property type="entry name" value="Retinoid-X_rcpt/HNF4"/>
</dbReference>
<dbReference type="InterPro" id="IPR001628">
    <property type="entry name" value="Znf_hrmn_rcpt"/>
</dbReference>
<dbReference type="InterPro" id="IPR013088">
    <property type="entry name" value="Znf_NHR/GATA"/>
</dbReference>
<dbReference type="PANTHER" id="PTHR24083">
    <property type="entry name" value="NUCLEAR HORMONE RECEPTOR"/>
    <property type="match status" value="1"/>
</dbReference>
<dbReference type="Pfam" id="PF00104">
    <property type="entry name" value="Hormone_recep"/>
    <property type="match status" value="1"/>
</dbReference>
<dbReference type="Pfam" id="PF11825">
    <property type="entry name" value="Nuc_recep-AF1"/>
    <property type="match status" value="1"/>
</dbReference>
<dbReference type="Pfam" id="PF00105">
    <property type="entry name" value="zf-C4"/>
    <property type="match status" value="1"/>
</dbReference>
<dbReference type="PRINTS" id="PR00545">
    <property type="entry name" value="RETINOIDXR"/>
</dbReference>
<dbReference type="PRINTS" id="PR00398">
    <property type="entry name" value="STRDHORMONER"/>
</dbReference>
<dbReference type="PRINTS" id="PR00047">
    <property type="entry name" value="STROIDFINGER"/>
</dbReference>
<dbReference type="SMART" id="SM00430">
    <property type="entry name" value="HOLI"/>
    <property type="match status" value="1"/>
</dbReference>
<dbReference type="SMART" id="SM00399">
    <property type="entry name" value="ZnF_C4"/>
    <property type="match status" value="1"/>
</dbReference>
<dbReference type="SUPFAM" id="SSF57716">
    <property type="entry name" value="Glucocorticoid receptor-like (DNA-binding domain)"/>
    <property type="match status" value="1"/>
</dbReference>
<dbReference type="SUPFAM" id="SSF48508">
    <property type="entry name" value="Nuclear receptor ligand-binding domain"/>
    <property type="match status" value="1"/>
</dbReference>
<dbReference type="PROSITE" id="PS51843">
    <property type="entry name" value="NR_LBD"/>
    <property type="match status" value="1"/>
</dbReference>
<dbReference type="PROSITE" id="PS00031">
    <property type="entry name" value="NUCLEAR_REC_DBD_1"/>
    <property type="match status" value="1"/>
</dbReference>
<dbReference type="PROSITE" id="PS51030">
    <property type="entry name" value="NUCLEAR_REC_DBD_2"/>
    <property type="match status" value="1"/>
</dbReference>
<name>RXRA_XENLA</name>
<gene>
    <name type="primary">rxra</name>
    <name type="synonym">nr2b1</name>
</gene>
<organism>
    <name type="scientific">Xenopus laevis</name>
    <name type="common">African clawed frog</name>
    <dbReference type="NCBI Taxonomy" id="8355"/>
    <lineage>
        <taxon>Eukaryota</taxon>
        <taxon>Metazoa</taxon>
        <taxon>Chordata</taxon>
        <taxon>Craniata</taxon>
        <taxon>Vertebrata</taxon>
        <taxon>Euteleostomi</taxon>
        <taxon>Amphibia</taxon>
        <taxon>Batrachia</taxon>
        <taxon>Anura</taxon>
        <taxon>Pipoidea</taxon>
        <taxon>Pipidae</taxon>
        <taxon>Xenopodinae</taxon>
        <taxon>Xenopus</taxon>
        <taxon>Xenopus</taxon>
    </lineage>
</organism>
<comment type="function">
    <text evidence="2">Receptor for retinoic acid that acts as a transcription factor. Forms homo- or heterodimers with retinoic acid receptors (rars) and binds to target response elements in response to their ligands, all-trans or 9-cis retinoic acid, to regulate gene expression in various biological processes. The rar/rxr heterodimers bind to the retinoic acid response elements (RARE) composed of tandem 5'-AGGTCA-3' sites known as DR1-DR5 to regulate transcription. The high affinity ligand for rxrs is 9-cis retinoic acid. In the absence of ligand, the rar/rxr heterodimers associate with a multiprotein complex containing transcription corepressors that induce histone deacetylation, chromatin condensation and transcriptional suppression. On ligand binding, the corepressors dissociate from the receptors and coactivators are recruited leading to transcriptional activation.</text>
</comment>
<comment type="subunit">
    <text evidence="2 6 7">Homodimer. Heterodimer; with a rar molecule. Binds DNA preferentially as a rar/rxr heterodimer (By similarity). Interacts with coactivator ncoa3 and with senp6 (PubMed:16912044, PubMed:9658407).</text>
</comment>
<comment type="subcellular location">
    <subcellularLocation>
        <location evidence="3">Nucleus</location>
    </subcellularLocation>
</comment>
<comment type="developmental stage">
    <text>It is synthesized during oogenesis and persists during early cleavage, levels drop before gastrulation and remain low until the tailbud stage, and then increase in the later stages.</text>
</comment>
<comment type="domain">
    <text>Composed of three domains: a modulating N-terminal domain, a DNA-binding domain and a C-terminal ligand-binding domain.</text>
</comment>
<comment type="PTM">
    <text evidence="1">Sumoylated on Lys-134; which negatively regulates transcriptional activity. Desumoylated specifically by SENP6 (By similarity).</text>
</comment>
<comment type="similarity">
    <text evidence="8">Belongs to the nuclear hormone receptor family. NR2 subfamily.</text>
</comment>